<organism>
    <name type="scientific">Photobacterium profundum (strain SS9)</name>
    <dbReference type="NCBI Taxonomy" id="298386"/>
    <lineage>
        <taxon>Bacteria</taxon>
        <taxon>Pseudomonadati</taxon>
        <taxon>Pseudomonadota</taxon>
        <taxon>Gammaproteobacteria</taxon>
        <taxon>Vibrionales</taxon>
        <taxon>Vibrionaceae</taxon>
        <taxon>Photobacterium</taxon>
    </lineage>
</organism>
<proteinExistence type="inferred from homology"/>
<protein>
    <recommendedName>
        <fullName evidence="1">Protein ApaG</fullName>
    </recommendedName>
</protein>
<dbReference type="EMBL" id="CR378664">
    <property type="protein sequence ID" value="CAG18833.1"/>
    <property type="molecule type" value="Genomic_DNA"/>
</dbReference>
<dbReference type="RefSeq" id="WP_011217190.1">
    <property type="nucleotide sequence ID" value="NC_006370.1"/>
</dbReference>
<dbReference type="SMR" id="Q6LV42"/>
<dbReference type="STRING" id="298386.PBPRA0401"/>
<dbReference type="KEGG" id="ppr:PBPRA0401"/>
<dbReference type="eggNOG" id="COG2967">
    <property type="taxonomic scope" value="Bacteria"/>
</dbReference>
<dbReference type="HOGENOM" id="CLU_128074_0_0_6"/>
<dbReference type="Proteomes" id="UP000000593">
    <property type="component" value="Chromosome 1"/>
</dbReference>
<dbReference type="GO" id="GO:0070987">
    <property type="term" value="P:error-free translesion synthesis"/>
    <property type="evidence" value="ECO:0007669"/>
    <property type="project" value="TreeGrafter"/>
</dbReference>
<dbReference type="Gene3D" id="2.60.40.1470">
    <property type="entry name" value="ApaG domain"/>
    <property type="match status" value="1"/>
</dbReference>
<dbReference type="HAMAP" id="MF_00791">
    <property type="entry name" value="ApaG"/>
    <property type="match status" value="1"/>
</dbReference>
<dbReference type="InterPro" id="IPR007474">
    <property type="entry name" value="ApaG_domain"/>
</dbReference>
<dbReference type="InterPro" id="IPR036767">
    <property type="entry name" value="ApaG_sf"/>
</dbReference>
<dbReference type="InterPro" id="IPR023065">
    <property type="entry name" value="Uncharacterised_ApaG"/>
</dbReference>
<dbReference type="NCBIfam" id="NF003967">
    <property type="entry name" value="PRK05461.1"/>
    <property type="match status" value="1"/>
</dbReference>
<dbReference type="PANTHER" id="PTHR14289">
    <property type="entry name" value="F-BOX ONLY PROTEIN 3"/>
    <property type="match status" value="1"/>
</dbReference>
<dbReference type="PANTHER" id="PTHR14289:SF16">
    <property type="entry name" value="POLYMERASE DELTA-INTERACTING PROTEIN 2"/>
    <property type="match status" value="1"/>
</dbReference>
<dbReference type="Pfam" id="PF04379">
    <property type="entry name" value="DUF525"/>
    <property type="match status" value="1"/>
</dbReference>
<dbReference type="SUPFAM" id="SSF110069">
    <property type="entry name" value="ApaG-like"/>
    <property type="match status" value="1"/>
</dbReference>
<dbReference type="PROSITE" id="PS51087">
    <property type="entry name" value="APAG"/>
    <property type="match status" value="1"/>
</dbReference>
<name>APAG_PHOPR</name>
<gene>
    <name evidence="1" type="primary">apaG</name>
    <name type="ordered locus">PBPRA0401</name>
</gene>
<reference key="1">
    <citation type="journal article" date="2005" name="Science">
        <title>Life at depth: Photobacterium profundum genome sequence and expression analysis.</title>
        <authorList>
            <person name="Vezzi A."/>
            <person name="Campanaro S."/>
            <person name="D'Angelo M."/>
            <person name="Simonato F."/>
            <person name="Vitulo N."/>
            <person name="Lauro F.M."/>
            <person name="Cestaro A."/>
            <person name="Malacrida G."/>
            <person name="Simionati B."/>
            <person name="Cannata N."/>
            <person name="Romualdi C."/>
            <person name="Bartlett D.H."/>
            <person name="Valle G."/>
        </authorList>
    </citation>
    <scope>NUCLEOTIDE SEQUENCE [LARGE SCALE GENOMIC DNA]</scope>
    <source>
        <strain>ATCC BAA-1253 / SS9</strain>
    </source>
</reference>
<accession>Q6LV42</accession>
<feature type="chain" id="PRO_0000197952" description="Protein ApaG">
    <location>
        <begin position="1"/>
        <end position="127"/>
    </location>
</feature>
<feature type="domain" description="ApaG" evidence="1">
    <location>
        <begin position="3"/>
        <end position="127"/>
    </location>
</feature>
<evidence type="ECO:0000255" key="1">
    <source>
        <dbReference type="HAMAP-Rule" id="MF_00791"/>
    </source>
</evidence>
<sequence length="127" mass="14225">MSANSPPTIKCNVVTHYIEEQSEPNNQRYVFSYTITIRNLGKGSAKLLSRYWLITDANGKRLVIEGEGVVGEQPEIKMNEEYTYTSGTIIETPLGVMQGHYVMGTEDGETFKAEVSPFRLAIPNILH</sequence>
<keyword id="KW-1185">Reference proteome</keyword>